<accession>Q2J5A7</accession>
<organism>
    <name type="scientific">Frankia casuarinae (strain DSM 45818 / CECT 9043 / HFP020203 / CcI3)</name>
    <dbReference type="NCBI Taxonomy" id="106370"/>
    <lineage>
        <taxon>Bacteria</taxon>
        <taxon>Bacillati</taxon>
        <taxon>Actinomycetota</taxon>
        <taxon>Actinomycetes</taxon>
        <taxon>Frankiales</taxon>
        <taxon>Frankiaceae</taxon>
        <taxon>Frankia</taxon>
    </lineage>
</organism>
<dbReference type="EC" id="2.8.1.6" evidence="1"/>
<dbReference type="EMBL" id="CP000249">
    <property type="protein sequence ID" value="ABD13535.1"/>
    <property type="status" value="ALT_INIT"/>
    <property type="molecule type" value="Genomic_DNA"/>
</dbReference>
<dbReference type="SMR" id="Q2J5A7"/>
<dbReference type="STRING" id="106370.Francci3_4187"/>
<dbReference type="KEGG" id="fra:Francci3_4187"/>
<dbReference type="eggNOG" id="COG0502">
    <property type="taxonomic scope" value="Bacteria"/>
</dbReference>
<dbReference type="HOGENOM" id="CLU_033172_2_1_11"/>
<dbReference type="OrthoDB" id="9786826at2"/>
<dbReference type="UniPathway" id="UPA00078">
    <property type="reaction ID" value="UER00162"/>
</dbReference>
<dbReference type="Proteomes" id="UP000001937">
    <property type="component" value="Chromosome"/>
</dbReference>
<dbReference type="GO" id="GO:0051537">
    <property type="term" value="F:2 iron, 2 sulfur cluster binding"/>
    <property type="evidence" value="ECO:0007669"/>
    <property type="project" value="UniProtKB-KW"/>
</dbReference>
<dbReference type="GO" id="GO:0051539">
    <property type="term" value="F:4 iron, 4 sulfur cluster binding"/>
    <property type="evidence" value="ECO:0007669"/>
    <property type="project" value="UniProtKB-KW"/>
</dbReference>
<dbReference type="GO" id="GO:0004076">
    <property type="term" value="F:biotin synthase activity"/>
    <property type="evidence" value="ECO:0007669"/>
    <property type="project" value="UniProtKB-UniRule"/>
</dbReference>
<dbReference type="GO" id="GO:0005506">
    <property type="term" value="F:iron ion binding"/>
    <property type="evidence" value="ECO:0007669"/>
    <property type="project" value="UniProtKB-UniRule"/>
</dbReference>
<dbReference type="GO" id="GO:0009102">
    <property type="term" value="P:biotin biosynthetic process"/>
    <property type="evidence" value="ECO:0007669"/>
    <property type="project" value="UniProtKB-UniRule"/>
</dbReference>
<dbReference type="CDD" id="cd01335">
    <property type="entry name" value="Radical_SAM"/>
    <property type="match status" value="1"/>
</dbReference>
<dbReference type="FunFam" id="3.20.20.70:FF:000026">
    <property type="entry name" value="Biotin synthase"/>
    <property type="match status" value="1"/>
</dbReference>
<dbReference type="Gene3D" id="3.20.20.70">
    <property type="entry name" value="Aldolase class I"/>
    <property type="match status" value="1"/>
</dbReference>
<dbReference type="HAMAP" id="MF_01694">
    <property type="entry name" value="BioB"/>
    <property type="match status" value="1"/>
</dbReference>
<dbReference type="InterPro" id="IPR013785">
    <property type="entry name" value="Aldolase_TIM"/>
</dbReference>
<dbReference type="InterPro" id="IPR010722">
    <property type="entry name" value="BATS_dom"/>
</dbReference>
<dbReference type="InterPro" id="IPR002684">
    <property type="entry name" value="Biotin_synth/BioAB"/>
</dbReference>
<dbReference type="InterPro" id="IPR024177">
    <property type="entry name" value="Biotin_synthase"/>
</dbReference>
<dbReference type="InterPro" id="IPR006638">
    <property type="entry name" value="Elp3/MiaA/NifB-like_rSAM"/>
</dbReference>
<dbReference type="InterPro" id="IPR007197">
    <property type="entry name" value="rSAM"/>
</dbReference>
<dbReference type="NCBIfam" id="TIGR00433">
    <property type="entry name" value="bioB"/>
    <property type="match status" value="1"/>
</dbReference>
<dbReference type="PANTHER" id="PTHR22976">
    <property type="entry name" value="BIOTIN SYNTHASE"/>
    <property type="match status" value="1"/>
</dbReference>
<dbReference type="PANTHER" id="PTHR22976:SF2">
    <property type="entry name" value="BIOTIN SYNTHASE, MITOCHONDRIAL"/>
    <property type="match status" value="1"/>
</dbReference>
<dbReference type="Pfam" id="PF06968">
    <property type="entry name" value="BATS"/>
    <property type="match status" value="1"/>
</dbReference>
<dbReference type="Pfam" id="PF04055">
    <property type="entry name" value="Radical_SAM"/>
    <property type="match status" value="1"/>
</dbReference>
<dbReference type="PIRSF" id="PIRSF001619">
    <property type="entry name" value="Biotin_synth"/>
    <property type="match status" value="1"/>
</dbReference>
<dbReference type="SFLD" id="SFLDG01060">
    <property type="entry name" value="BATS_domain_containing"/>
    <property type="match status" value="1"/>
</dbReference>
<dbReference type="SFLD" id="SFLDG01278">
    <property type="entry name" value="biotin_synthase_like"/>
    <property type="match status" value="1"/>
</dbReference>
<dbReference type="SMART" id="SM00876">
    <property type="entry name" value="BATS"/>
    <property type="match status" value="1"/>
</dbReference>
<dbReference type="SMART" id="SM00729">
    <property type="entry name" value="Elp3"/>
    <property type="match status" value="1"/>
</dbReference>
<dbReference type="SUPFAM" id="SSF102114">
    <property type="entry name" value="Radical SAM enzymes"/>
    <property type="match status" value="1"/>
</dbReference>
<dbReference type="PROSITE" id="PS51918">
    <property type="entry name" value="RADICAL_SAM"/>
    <property type="match status" value="1"/>
</dbReference>
<evidence type="ECO:0000255" key="1">
    <source>
        <dbReference type="HAMAP-Rule" id="MF_01694"/>
    </source>
</evidence>
<evidence type="ECO:0000255" key="2">
    <source>
        <dbReference type="PROSITE-ProRule" id="PRU01266"/>
    </source>
</evidence>
<evidence type="ECO:0000305" key="3"/>
<gene>
    <name evidence="1" type="primary">bioB2</name>
    <name type="ordered locus">Francci3_4187</name>
</gene>
<name>BIOB2_FRACC</name>
<proteinExistence type="inferred from homology"/>
<sequence length="360" mass="38258">MDLSATLNSLVSKGVSGQAPTRDEALAVLRSDDDDLLDVVAAAYRLRRRYFGRRVKLNFLVNLKSGLCPEDCSYCSQRLGSNTGILKYTWLKPEEAAATAGAGISGGARRVCLVASGRGPTDRDVDRVADTIGAIKTAHPDVEVCACLGLLSDGQAAQLRAAGADAYNHNLNTAGEKYADICTTHTYNDRVDTVQEARHAGLSPCSGIIAGMGESDEDLVDVAFALRELAPDSIPVNFLMPFEGTPLGAEWNLNPRQCLRILAMVRFVNPTAEVRLSGGREIHLGSMQPLALSVVNSIFLGDYLTSEGQEGHQDLKMIAEAGFTVEGLNTDAEAALAMGAGLERVALRQRGAGTDLPPNA</sequence>
<comment type="function">
    <text evidence="1">Catalyzes the conversion of dethiobiotin (DTB) to biotin by the insertion of a sulfur atom into dethiobiotin via a radical-based mechanism.</text>
</comment>
<comment type="catalytic activity">
    <reaction evidence="1">
        <text>(4R,5S)-dethiobiotin + (sulfur carrier)-SH + 2 reduced [2Fe-2S]-[ferredoxin] + 2 S-adenosyl-L-methionine = (sulfur carrier)-H + biotin + 2 5'-deoxyadenosine + 2 L-methionine + 2 oxidized [2Fe-2S]-[ferredoxin]</text>
        <dbReference type="Rhea" id="RHEA:22060"/>
        <dbReference type="Rhea" id="RHEA-COMP:10000"/>
        <dbReference type="Rhea" id="RHEA-COMP:10001"/>
        <dbReference type="Rhea" id="RHEA-COMP:14737"/>
        <dbReference type="Rhea" id="RHEA-COMP:14739"/>
        <dbReference type="ChEBI" id="CHEBI:17319"/>
        <dbReference type="ChEBI" id="CHEBI:29917"/>
        <dbReference type="ChEBI" id="CHEBI:33737"/>
        <dbReference type="ChEBI" id="CHEBI:33738"/>
        <dbReference type="ChEBI" id="CHEBI:57586"/>
        <dbReference type="ChEBI" id="CHEBI:57844"/>
        <dbReference type="ChEBI" id="CHEBI:59789"/>
        <dbReference type="ChEBI" id="CHEBI:64428"/>
        <dbReference type="ChEBI" id="CHEBI:149473"/>
        <dbReference type="EC" id="2.8.1.6"/>
    </reaction>
</comment>
<comment type="cofactor">
    <cofactor evidence="1">
        <name>[4Fe-4S] cluster</name>
        <dbReference type="ChEBI" id="CHEBI:49883"/>
    </cofactor>
    <text evidence="1">Binds 1 [4Fe-4S] cluster. The cluster is coordinated with 3 cysteines and an exchangeable S-adenosyl-L-methionine.</text>
</comment>
<comment type="cofactor">
    <cofactor evidence="1">
        <name>[2Fe-2S] cluster</name>
        <dbReference type="ChEBI" id="CHEBI:190135"/>
    </cofactor>
    <text evidence="1">Binds 1 [2Fe-2S] cluster. The cluster is coordinated with 3 cysteines and 1 arginine.</text>
</comment>
<comment type="pathway">
    <text evidence="1">Cofactor biosynthesis; biotin biosynthesis; biotin from 7,8-diaminononanoate: step 2/2.</text>
</comment>
<comment type="subunit">
    <text evidence="1">Homodimer.</text>
</comment>
<comment type="similarity">
    <text evidence="1">Belongs to the radical SAM superfamily. Biotin synthase family.</text>
</comment>
<comment type="sequence caution" evidence="3">
    <conflict type="erroneous initiation">
        <sequence resource="EMBL-CDS" id="ABD13535"/>
    </conflict>
</comment>
<protein>
    <recommendedName>
        <fullName evidence="1">Biotin synthase 2</fullName>
        <ecNumber evidence="1">2.8.1.6</ecNumber>
    </recommendedName>
</protein>
<feature type="chain" id="PRO_0000381389" description="Biotin synthase 2">
    <location>
        <begin position="1"/>
        <end position="360"/>
    </location>
</feature>
<feature type="domain" description="Radical SAM core" evidence="2">
    <location>
        <begin position="53"/>
        <end position="280"/>
    </location>
</feature>
<feature type="binding site" evidence="1">
    <location>
        <position position="68"/>
    </location>
    <ligand>
        <name>[4Fe-4S] cluster</name>
        <dbReference type="ChEBI" id="CHEBI:49883"/>
        <note>4Fe-4S-S-AdoMet</note>
    </ligand>
</feature>
<feature type="binding site" evidence="1">
    <location>
        <position position="72"/>
    </location>
    <ligand>
        <name>[4Fe-4S] cluster</name>
        <dbReference type="ChEBI" id="CHEBI:49883"/>
        <note>4Fe-4S-S-AdoMet</note>
    </ligand>
</feature>
<feature type="binding site" evidence="1">
    <location>
        <position position="75"/>
    </location>
    <ligand>
        <name>[4Fe-4S] cluster</name>
        <dbReference type="ChEBI" id="CHEBI:49883"/>
        <note>4Fe-4S-S-AdoMet</note>
    </ligand>
</feature>
<feature type="binding site" evidence="1">
    <location>
        <position position="112"/>
    </location>
    <ligand>
        <name>[2Fe-2S] cluster</name>
        <dbReference type="ChEBI" id="CHEBI:190135"/>
    </ligand>
</feature>
<feature type="binding site" evidence="1">
    <location>
        <position position="145"/>
    </location>
    <ligand>
        <name>[2Fe-2S] cluster</name>
        <dbReference type="ChEBI" id="CHEBI:190135"/>
    </ligand>
</feature>
<feature type="binding site" evidence="1">
    <location>
        <position position="205"/>
    </location>
    <ligand>
        <name>[2Fe-2S] cluster</name>
        <dbReference type="ChEBI" id="CHEBI:190135"/>
    </ligand>
</feature>
<feature type="binding site" evidence="1">
    <location>
        <position position="275"/>
    </location>
    <ligand>
        <name>[2Fe-2S] cluster</name>
        <dbReference type="ChEBI" id="CHEBI:190135"/>
    </ligand>
</feature>
<reference key="1">
    <citation type="journal article" date="2007" name="Genome Res.">
        <title>Genome characteristics of facultatively symbiotic Frankia sp. strains reflect host range and host plant biogeography.</title>
        <authorList>
            <person name="Normand P."/>
            <person name="Lapierre P."/>
            <person name="Tisa L.S."/>
            <person name="Gogarten J.P."/>
            <person name="Alloisio N."/>
            <person name="Bagnarol E."/>
            <person name="Bassi C.A."/>
            <person name="Berry A.M."/>
            <person name="Bickhart D.M."/>
            <person name="Choisne N."/>
            <person name="Couloux A."/>
            <person name="Cournoyer B."/>
            <person name="Cruveiller S."/>
            <person name="Daubin V."/>
            <person name="Demange N."/>
            <person name="Francino M.P."/>
            <person name="Goltsman E."/>
            <person name="Huang Y."/>
            <person name="Kopp O.R."/>
            <person name="Labarre L."/>
            <person name="Lapidus A."/>
            <person name="Lavire C."/>
            <person name="Marechal J."/>
            <person name="Martinez M."/>
            <person name="Mastronunzio J.E."/>
            <person name="Mullin B.C."/>
            <person name="Niemann J."/>
            <person name="Pujic P."/>
            <person name="Rawnsley T."/>
            <person name="Rouy Z."/>
            <person name="Schenowitz C."/>
            <person name="Sellstedt A."/>
            <person name="Tavares F."/>
            <person name="Tomkins J.P."/>
            <person name="Vallenet D."/>
            <person name="Valverde C."/>
            <person name="Wall L.G."/>
            <person name="Wang Y."/>
            <person name="Medigue C."/>
            <person name="Benson D.R."/>
        </authorList>
    </citation>
    <scope>NUCLEOTIDE SEQUENCE [LARGE SCALE GENOMIC DNA]</scope>
    <source>
        <strain>DSM 45818 / CECT 9043 / HFP020203 / CcI3</strain>
    </source>
</reference>
<keyword id="KW-0001">2Fe-2S</keyword>
<keyword id="KW-0004">4Fe-4S</keyword>
<keyword id="KW-0093">Biotin biosynthesis</keyword>
<keyword id="KW-0408">Iron</keyword>
<keyword id="KW-0411">Iron-sulfur</keyword>
<keyword id="KW-0479">Metal-binding</keyword>
<keyword id="KW-1185">Reference proteome</keyword>
<keyword id="KW-0949">S-adenosyl-L-methionine</keyword>
<keyword id="KW-0808">Transferase</keyword>